<dbReference type="EMBL" id="CP000863">
    <property type="protein sequence ID" value="ACC57687.1"/>
    <property type="molecule type" value="Genomic_DNA"/>
</dbReference>
<dbReference type="RefSeq" id="WP_000090661.1">
    <property type="nucleotide sequence ID" value="NZ_CP031380.1"/>
</dbReference>
<dbReference type="SMR" id="B2HUA3"/>
<dbReference type="GeneID" id="92894414"/>
<dbReference type="KEGG" id="abc:ACICU_02375"/>
<dbReference type="HOGENOM" id="CLU_148710_2_3_6"/>
<dbReference type="Proteomes" id="UP000008839">
    <property type="component" value="Chromosome"/>
</dbReference>
<dbReference type="GO" id="GO:0022627">
    <property type="term" value="C:cytosolic small ribosomal subunit"/>
    <property type="evidence" value="ECO:0007669"/>
    <property type="project" value="TreeGrafter"/>
</dbReference>
<dbReference type="GO" id="GO:0070181">
    <property type="term" value="F:small ribosomal subunit rRNA binding"/>
    <property type="evidence" value="ECO:0007669"/>
    <property type="project" value="TreeGrafter"/>
</dbReference>
<dbReference type="GO" id="GO:0003735">
    <property type="term" value="F:structural constituent of ribosome"/>
    <property type="evidence" value="ECO:0007669"/>
    <property type="project" value="InterPro"/>
</dbReference>
<dbReference type="GO" id="GO:0006412">
    <property type="term" value="P:translation"/>
    <property type="evidence" value="ECO:0007669"/>
    <property type="project" value="UniProtKB-UniRule"/>
</dbReference>
<dbReference type="FunFam" id="4.10.640.10:FF:000001">
    <property type="entry name" value="30S ribosomal protein S18"/>
    <property type="match status" value="1"/>
</dbReference>
<dbReference type="Gene3D" id="4.10.640.10">
    <property type="entry name" value="Ribosomal protein S18"/>
    <property type="match status" value="1"/>
</dbReference>
<dbReference type="HAMAP" id="MF_00270">
    <property type="entry name" value="Ribosomal_bS18"/>
    <property type="match status" value="1"/>
</dbReference>
<dbReference type="InterPro" id="IPR001648">
    <property type="entry name" value="Ribosomal_bS18"/>
</dbReference>
<dbReference type="InterPro" id="IPR018275">
    <property type="entry name" value="Ribosomal_bS18_CS"/>
</dbReference>
<dbReference type="InterPro" id="IPR036870">
    <property type="entry name" value="Ribosomal_bS18_sf"/>
</dbReference>
<dbReference type="NCBIfam" id="TIGR00165">
    <property type="entry name" value="S18"/>
    <property type="match status" value="1"/>
</dbReference>
<dbReference type="PANTHER" id="PTHR13479">
    <property type="entry name" value="30S RIBOSOMAL PROTEIN S18"/>
    <property type="match status" value="1"/>
</dbReference>
<dbReference type="PANTHER" id="PTHR13479:SF40">
    <property type="entry name" value="SMALL RIBOSOMAL SUBUNIT PROTEIN BS18M"/>
    <property type="match status" value="1"/>
</dbReference>
<dbReference type="Pfam" id="PF01084">
    <property type="entry name" value="Ribosomal_S18"/>
    <property type="match status" value="1"/>
</dbReference>
<dbReference type="PRINTS" id="PR00974">
    <property type="entry name" value="RIBOSOMALS18"/>
</dbReference>
<dbReference type="SUPFAM" id="SSF46911">
    <property type="entry name" value="Ribosomal protein S18"/>
    <property type="match status" value="1"/>
</dbReference>
<dbReference type="PROSITE" id="PS00057">
    <property type="entry name" value="RIBOSOMAL_S18"/>
    <property type="match status" value="1"/>
</dbReference>
<name>RS18_ACIBC</name>
<sequence>MARFYRRRKFCRFTAENVAYIDYKDIDTLKQYITENGKIVPSRITGTKARYQRQLALAIKQARYLSLIPYTDNHK</sequence>
<reference key="1">
    <citation type="journal article" date="2008" name="Antimicrob. Agents Chemother.">
        <title>Whole-genome pyrosequencing of an epidemic multidrug-resistant Acinetobacter baumannii strain belonging to the European clone II group.</title>
        <authorList>
            <person name="Iacono M."/>
            <person name="Villa L."/>
            <person name="Fortini D."/>
            <person name="Bordoni R."/>
            <person name="Imperi F."/>
            <person name="Bonnal R.J."/>
            <person name="Sicheritz-Ponten T."/>
            <person name="De Bellis G."/>
            <person name="Visca P."/>
            <person name="Cassone A."/>
            <person name="Carattoli A."/>
        </authorList>
    </citation>
    <scope>NUCLEOTIDE SEQUENCE [LARGE SCALE GENOMIC DNA]</scope>
    <source>
        <strain>ACICU</strain>
    </source>
</reference>
<feature type="chain" id="PRO_1000114389" description="Small ribosomal subunit protein bS18">
    <location>
        <begin position="1"/>
        <end position="75"/>
    </location>
</feature>
<comment type="function">
    <text evidence="1">Binds as a heterodimer with protein bS6 to the central domain of the 16S rRNA, where it helps stabilize the platform of the 30S subunit.</text>
</comment>
<comment type="subunit">
    <text evidence="1">Part of the 30S ribosomal subunit. Forms a tight heterodimer with protein bS6.</text>
</comment>
<comment type="similarity">
    <text evidence="1">Belongs to the bacterial ribosomal protein bS18 family.</text>
</comment>
<organism>
    <name type="scientific">Acinetobacter baumannii (strain ACICU)</name>
    <dbReference type="NCBI Taxonomy" id="405416"/>
    <lineage>
        <taxon>Bacteria</taxon>
        <taxon>Pseudomonadati</taxon>
        <taxon>Pseudomonadota</taxon>
        <taxon>Gammaproteobacteria</taxon>
        <taxon>Moraxellales</taxon>
        <taxon>Moraxellaceae</taxon>
        <taxon>Acinetobacter</taxon>
        <taxon>Acinetobacter calcoaceticus/baumannii complex</taxon>
    </lineage>
</organism>
<accession>B2HUA3</accession>
<keyword id="KW-0687">Ribonucleoprotein</keyword>
<keyword id="KW-0689">Ribosomal protein</keyword>
<keyword id="KW-0694">RNA-binding</keyword>
<keyword id="KW-0699">rRNA-binding</keyword>
<gene>
    <name evidence="1" type="primary">rpsR</name>
    <name type="ordered locus">ACICU_02375</name>
</gene>
<proteinExistence type="inferred from homology"/>
<evidence type="ECO:0000255" key="1">
    <source>
        <dbReference type="HAMAP-Rule" id="MF_00270"/>
    </source>
</evidence>
<evidence type="ECO:0000305" key="2"/>
<protein>
    <recommendedName>
        <fullName evidence="1">Small ribosomal subunit protein bS18</fullName>
    </recommendedName>
    <alternativeName>
        <fullName evidence="2">30S ribosomal protein S18</fullName>
    </alternativeName>
</protein>